<keyword id="KW-0004">4Fe-4S</keyword>
<keyword id="KW-0249">Electron transport</keyword>
<keyword id="KW-0408">Iron</keyword>
<keyword id="KW-0411">Iron-sulfur</keyword>
<keyword id="KW-0479">Metal-binding</keyword>
<keyword id="KW-1185">Reference proteome</keyword>
<keyword id="KW-0677">Repeat</keyword>
<keyword id="KW-0813">Transport</keyword>
<name>DMSB_HAEIN</name>
<sequence length="205" mass="22927">MEQYGFYFDSERCTGCKTCELACKDYKDLGTEVNFRRIYEYTGGQWNQQADGCWHQNIFAYYMSISCNHCADPACTKVCPTGAMHKNADGFVIVNEEICIGCRYCHMACPYDAPQYDAQKGHMTKCDGCYSRVKSGQKPICVDACPLRALDFAPIDELRTKYGTQASIAPLPPTDITQPNLVVKPNKYARLSGDTSGFLGNPREV</sequence>
<organism>
    <name type="scientific">Haemophilus influenzae (strain ATCC 51907 / DSM 11121 / KW20 / Rd)</name>
    <dbReference type="NCBI Taxonomy" id="71421"/>
    <lineage>
        <taxon>Bacteria</taxon>
        <taxon>Pseudomonadati</taxon>
        <taxon>Pseudomonadota</taxon>
        <taxon>Gammaproteobacteria</taxon>
        <taxon>Pasteurellales</taxon>
        <taxon>Pasteurellaceae</taxon>
        <taxon>Haemophilus</taxon>
    </lineage>
</organism>
<comment type="function">
    <text evidence="1">Electron transfer subunit of the terminal reductase during anaerobic growth on various sulfoxide and N-oxide compounds.</text>
</comment>
<comment type="cofactor">
    <cofactor evidence="1">
        <name>[4Fe-4S] cluster</name>
        <dbReference type="ChEBI" id="CHEBI:49883"/>
    </cofactor>
    <text evidence="1">Binds 4 [4Fe-4S] clusters.</text>
</comment>
<comment type="subunit">
    <text evidence="1">Heterotrimeric enzyme composed of a catalytic heterodimer (DmsAB) and a membrane anchor protein (DmsC).</text>
</comment>
<gene>
    <name type="primary">dmsB</name>
    <name type="ordered locus">HI_1046</name>
</gene>
<accession>P45003</accession>
<accession>Q48049</accession>
<protein>
    <recommendedName>
        <fullName>Anaerobic dimethyl sulfoxide reductase chain B</fullName>
    </recommendedName>
    <alternativeName>
        <fullName>DMSO reductase iron-sulfur subunit</fullName>
    </alternativeName>
</protein>
<reference key="1">
    <citation type="journal article" date="1995" name="Science">
        <title>Whole-genome random sequencing and assembly of Haemophilus influenzae Rd.</title>
        <authorList>
            <person name="Fleischmann R.D."/>
            <person name="Adams M.D."/>
            <person name="White O."/>
            <person name="Clayton R.A."/>
            <person name="Kirkness E.F."/>
            <person name="Kerlavage A.R."/>
            <person name="Bult C.J."/>
            <person name="Tomb J.-F."/>
            <person name="Dougherty B.A."/>
            <person name="Merrick J.M."/>
            <person name="McKenney K."/>
            <person name="Sutton G.G."/>
            <person name="FitzHugh W."/>
            <person name="Fields C.A."/>
            <person name="Gocayne J.D."/>
            <person name="Scott J.D."/>
            <person name="Shirley R."/>
            <person name="Liu L.-I."/>
            <person name="Glodek A."/>
            <person name="Kelley J.M."/>
            <person name="Weidman J.F."/>
            <person name="Phillips C.A."/>
            <person name="Spriggs T."/>
            <person name="Hedblom E."/>
            <person name="Cotton M.D."/>
            <person name="Utterback T.R."/>
            <person name="Hanna M.C."/>
            <person name="Nguyen D.T."/>
            <person name="Saudek D.M."/>
            <person name="Brandon R.C."/>
            <person name="Fine L.D."/>
            <person name="Fritchman J.L."/>
            <person name="Fuhrmann J.L."/>
            <person name="Geoghagen N.S.M."/>
            <person name="Gnehm C.L."/>
            <person name="McDonald L.A."/>
            <person name="Small K.V."/>
            <person name="Fraser C.M."/>
            <person name="Smith H.O."/>
            <person name="Venter J.C."/>
        </authorList>
    </citation>
    <scope>NUCLEOTIDE SEQUENCE [LARGE SCALE GENOMIC DNA]</scope>
    <source>
        <strain>ATCC 51907 / DSM 11121 / KW20 / Rd</strain>
    </source>
</reference>
<reference key="2">
    <citation type="journal article" date="1996" name="Gene">
        <title>Sequences of the genes encoding the A, B and C subunits of the Haemophilus influenzae dimethylsulfoxide reductase complex.</title>
        <authorList>
            <person name="Loosmore S.M."/>
            <person name="Shortreed J.M."/>
            <person name="Coleman D.C."/>
            <person name="England D.M."/>
            <person name="Klein M.H."/>
        </authorList>
    </citation>
    <scope>NUCLEOTIDE SEQUENCE [GENOMIC DNA]</scope>
    <source>
        <strain>Eagan / Serotype B</strain>
    </source>
</reference>
<evidence type="ECO:0000250" key="1"/>
<evidence type="ECO:0000255" key="2">
    <source>
        <dbReference type="PROSITE-ProRule" id="PRU00711"/>
    </source>
</evidence>
<proteinExistence type="inferred from homology"/>
<dbReference type="EMBL" id="L42023">
    <property type="protein sequence ID" value="AAC22705.1"/>
    <property type="molecule type" value="Genomic_DNA"/>
</dbReference>
<dbReference type="EMBL" id="U26665">
    <property type="protein sequence ID" value="AAB06234.1"/>
    <property type="molecule type" value="Genomic_DNA"/>
</dbReference>
<dbReference type="PIR" id="F64109">
    <property type="entry name" value="F64109"/>
</dbReference>
<dbReference type="RefSeq" id="NP_439205.1">
    <property type="nucleotide sequence ID" value="NC_000907.1"/>
</dbReference>
<dbReference type="SMR" id="P45003"/>
<dbReference type="STRING" id="71421.HI_1046"/>
<dbReference type="EnsemblBacteria" id="AAC22705">
    <property type="protein sequence ID" value="AAC22705"/>
    <property type="gene ID" value="HI_1046"/>
</dbReference>
<dbReference type="KEGG" id="hin:HI_1046"/>
<dbReference type="PATRIC" id="fig|71421.8.peg.1091"/>
<dbReference type="eggNOG" id="COG0437">
    <property type="taxonomic scope" value="Bacteria"/>
</dbReference>
<dbReference type="HOGENOM" id="CLU_043374_2_0_6"/>
<dbReference type="OrthoDB" id="9779457at2"/>
<dbReference type="PhylomeDB" id="P45003"/>
<dbReference type="BioCyc" id="HINF71421:G1GJ1-1085-MONOMER"/>
<dbReference type="Proteomes" id="UP000000579">
    <property type="component" value="Chromosome"/>
</dbReference>
<dbReference type="GO" id="GO:0051539">
    <property type="term" value="F:4 iron, 4 sulfur cluster binding"/>
    <property type="evidence" value="ECO:0007669"/>
    <property type="project" value="UniProtKB-KW"/>
</dbReference>
<dbReference type="GO" id="GO:0046872">
    <property type="term" value="F:metal ion binding"/>
    <property type="evidence" value="ECO:0007669"/>
    <property type="project" value="UniProtKB-KW"/>
</dbReference>
<dbReference type="CDD" id="cd16371">
    <property type="entry name" value="DMSOR_beta_like"/>
    <property type="match status" value="1"/>
</dbReference>
<dbReference type="FunFam" id="3.30.70.20:FF:000003">
    <property type="entry name" value="Dimethyl sulfoxide reductase subunit B"/>
    <property type="match status" value="1"/>
</dbReference>
<dbReference type="Gene3D" id="3.30.70.20">
    <property type="match status" value="2"/>
</dbReference>
<dbReference type="InterPro" id="IPR017896">
    <property type="entry name" value="4Fe4S_Fe-S-bd"/>
</dbReference>
<dbReference type="InterPro" id="IPR017900">
    <property type="entry name" value="4Fe4S_Fe_S_CS"/>
</dbReference>
<dbReference type="InterPro" id="IPR014297">
    <property type="entry name" value="DMSO_DmsB"/>
</dbReference>
<dbReference type="InterPro" id="IPR050954">
    <property type="entry name" value="ET_IronSulfur_Cluster-Binding"/>
</dbReference>
<dbReference type="NCBIfam" id="TIGR02951">
    <property type="entry name" value="DMSO_dmsB"/>
    <property type="match status" value="1"/>
</dbReference>
<dbReference type="PANTHER" id="PTHR43177:SF5">
    <property type="entry name" value="ANAEROBIC DIMETHYL SULFOXIDE REDUCTASE CHAIN B-RELATED"/>
    <property type="match status" value="1"/>
</dbReference>
<dbReference type="PANTHER" id="PTHR43177">
    <property type="entry name" value="PROTEIN NRFC"/>
    <property type="match status" value="1"/>
</dbReference>
<dbReference type="Pfam" id="PF13247">
    <property type="entry name" value="Fer4_11"/>
    <property type="match status" value="1"/>
</dbReference>
<dbReference type="Pfam" id="PF12797">
    <property type="entry name" value="Fer4_2"/>
    <property type="match status" value="1"/>
</dbReference>
<dbReference type="SUPFAM" id="SSF54862">
    <property type="entry name" value="4Fe-4S ferredoxins"/>
    <property type="match status" value="1"/>
</dbReference>
<dbReference type="PROSITE" id="PS00198">
    <property type="entry name" value="4FE4S_FER_1"/>
    <property type="match status" value="1"/>
</dbReference>
<dbReference type="PROSITE" id="PS51379">
    <property type="entry name" value="4FE4S_FER_2"/>
    <property type="match status" value="3"/>
</dbReference>
<feature type="chain" id="PRO_0000159246" description="Anaerobic dimethyl sulfoxide reductase chain B">
    <location>
        <begin position="1"/>
        <end position="205"/>
    </location>
</feature>
<feature type="domain" description="4Fe-4S ferredoxin-type 1" evidence="2">
    <location>
        <begin position="4"/>
        <end position="32"/>
    </location>
</feature>
<feature type="domain" description="4Fe-4S ferredoxin-type 2" evidence="2">
    <location>
        <begin position="57"/>
        <end position="89"/>
    </location>
</feature>
<feature type="domain" description="4Fe-4S ferredoxin-type 3" evidence="2">
    <location>
        <begin position="90"/>
        <end position="119"/>
    </location>
</feature>
<feature type="binding site" evidence="1">
    <location>
        <position position="13"/>
    </location>
    <ligand>
        <name>[4Fe-4S] cluster</name>
        <dbReference type="ChEBI" id="CHEBI:49883"/>
        <label>1</label>
    </ligand>
</feature>
<feature type="binding site" evidence="1">
    <location>
        <position position="16"/>
    </location>
    <ligand>
        <name>[4Fe-4S] cluster</name>
        <dbReference type="ChEBI" id="CHEBI:49883"/>
        <label>1</label>
    </ligand>
</feature>
<feature type="binding site" evidence="1">
    <location>
        <position position="19"/>
    </location>
    <ligand>
        <name>[4Fe-4S] cluster</name>
        <dbReference type="ChEBI" id="CHEBI:49883"/>
        <label>1</label>
    </ligand>
</feature>
<feature type="binding site" evidence="1">
    <location>
        <position position="23"/>
    </location>
    <ligand>
        <name>[4Fe-4S] cluster</name>
        <dbReference type="ChEBI" id="CHEBI:49883"/>
        <label>2</label>
    </ligand>
</feature>
<feature type="binding site" evidence="1">
    <location>
        <position position="67"/>
    </location>
    <ligand>
        <name>[4Fe-4S] cluster</name>
        <dbReference type="ChEBI" id="CHEBI:49883"/>
        <label>3</label>
    </ligand>
</feature>
<feature type="binding site" evidence="1">
    <location>
        <position position="70"/>
    </location>
    <ligand>
        <name>[4Fe-4S] cluster</name>
        <dbReference type="ChEBI" id="CHEBI:49883"/>
        <label>3</label>
    </ligand>
</feature>
<feature type="binding site" evidence="1">
    <location>
        <position position="75"/>
    </location>
    <ligand>
        <name>[4Fe-4S] cluster</name>
        <dbReference type="ChEBI" id="CHEBI:49883"/>
        <label>3</label>
    </ligand>
</feature>
<feature type="binding site" evidence="1">
    <location>
        <position position="79"/>
    </location>
    <ligand>
        <name>[4Fe-4S] cluster</name>
        <dbReference type="ChEBI" id="CHEBI:49883"/>
        <label>4</label>
    </ligand>
</feature>
<feature type="binding site" evidence="1">
    <location>
        <position position="99"/>
    </location>
    <ligand>
        <name>[4Fe-4S] cluster</name>
        <dbReference type="ChEBI" id="CHEBI:49883"/>
        <label>4</label>
    </ligand>
</feature>
<feature type="binding site" evidence="1">
    <location>
        <position position="102"/>
    </location>
    <ligand>
        <name>[4Fe-4S] cluster</name>
        <dbReference type="ChEBI" id="CHEBI:49883"/>
        <label>4</label>
    </ligand>
</feature>
<feature type="binding site" evidence="1">
    <location>
        <position position="105"/>
    </location>
    <ligand>
        <name>[4Fe-4S] cluster</name>
        <dbReference type="ChEBI" id="CHEBI:49883"/>
        <label>4</label>
    </ligand>
</feature>
<feature type="binding site" evidence="1">
    <location>
        <position position="109"/>
    </location>
    <ligand>
        <name>[4Fe-4S] cluster</name>
        <dbReference type="ChEBI" id="CHEBI:49883"/>
        <label>3</label>
    </ligand>
</feature>
<feature type="binding site" evidence="1">
    <location>
        <position position="126"/>
    </location>
    <ligand>
        <name>[4Fe-4S] cluster</name>
        <dbReference type="ChEBI" id="CHEBI:49883"/>
        <label>2</label>
    </ligand>
</feature>
<feature type="binding site" evidence="1">
    <location>
        <position position="129"/>
    </location>
    <ligand>
        <name>[4Fe-4S] cluster</name>
        <dbReference type="ChEBI" id="CHEBI:49883"/>
        <label>2</label>
    </ligand>
</feature>
<feature type="binding site" evidence="1">
    <location>
        <position position="141"/>
    </location>
    <ligand>
        <name>[4Fe-4S] cluster</name>
        <dbReference type="ChEBI" id="CHEBI:49883"/>
        <label>2</label>
    </ligand>
</feature>
<feature type="binding site" evidence="1">
    <location>
        <position position="145"/>
    </location>
    <ligand>
        <name>[4Fe-4S] cluster</name>
        <dbReference type="ChEBI" id="CHEBI:49883"/>
        <label>1</label>
    </ligand>
</feature>
<feature type="sequence variant" description="In strain: Eagan.">
    <original>A</original>
    <variation>G</variation>
    <location>
        <position position="60"/>
    </location>
</feature>